<comment type="function">
    <text evidence="1">Catalyzes the synthesis of GMP from XMP.</text>
</comment>
<comment type="catalytic activity">
    <reaction evidence="1">
        <text>XMP + L-glutamine + ATP + H2O = GMP + L-glutamate + AMP + diphosphate + 2 H(+)</text>
        <dbReference type="Rhea" id="RHEA:11680"/>
        <dbReference type="ChEBI" id="CHEBI:15377"/>
        <dbReference type="ChEBI" id="CHEBI:15378"/>
        <dbReference type="ChEBI" id="CHEBI:29985"/>
        <dbReference type="ChEBI" id="CHEBI:30616"/>
        <dbReference type="ChEBI" id="CHEBI:33019"/>
        <dbReference type="ChEBI" id="CHEBI:57464"/>
        <dbReference type="ChEBI" id="CHEBI:58115"/>
        <dbReference type="ChEBI" id="CHEBI:58359"/>
        <dbReference type="ChEBI" id="CHEBI:456215"/>
        <dbReference type="EC" id="6.3.5.2"/>
    </reaction>
</comment>
<comment type="pathway">
    <text evidence="1">Purine metabolism; GMP biosynthesis; GMP from XMP (L-Gln route): step 1/1.</text>
</comment>
<comment type="subunit">
    <text evidence="1">Homodimer.</text>
</comment>
<organism>
    <name type="scientific">Tolumonas auensis (strain DSM 9187 / NBRC 110442 / TA 4)</name>
    <dbReference type="NCBI Taxonomy" id="595494"/>
    <lineage>
        <taxon>Bacteria</taxon>
        <taxon>Pseudomonadati</taxon>
        <taxon>Pseudomonadota</taxon>
        <taxon>Gammaproteobacteria</taxon>
        <taxon>Aeromonadales</taxon>
        <taxon>Aeromonadaceae</taxon>
        <taxon>Tolumonas</taxon>
    </lineage>
</organism>
<reference key="1">
    <citation type="submission" date="2009-05" db="EMBL/GenBank/DDBJ databases">
        <title>Complete sequence of Tolumonas auensis DSM 9187.</title>
        <authorList>
            <consortium name="US DOE Joint Genome Institute"/>
            <person name="Lucas S."/>
            <person name="Copeland A."/>
            <person name="Lapidus A."/>
            <person name="Glavina del Rio T."/>
            <person name="Tice H."/>
            <person name="Bruce D."/>
            <person name="Goodwin L."/>
            <person name="Pitluck S."/>
            <person name="Chertkov O."/>
            <person name="Brettin T."/>
            <person name="Detter J.C."/>
            <person name="Han C."/>
            <person name="Larimer F."/>
            <person name="Land M."/>
            <person name="Hauser L."/>
            <person name="Kyrpides N."/>
            <person name="Mikhailova N."/>
            <person name="Spring S."/>
            <person name="Beller H."/>
        </authorList>
    </citation>
    <scope>NUCLEOTIDE SEQUENCE [LARGE SCALE GENOMIC DNA]</scope>
    <source>
        <strain>DSM 9187 / NBRC 110442 / TA 4</strain>
    </source>
</reference>
<gene>
    <name evidence="1" type="primary">guaA</name>
    <name type="ordered locus">Tola_2171</name>
</gene>
<feature type="chain" id="PRO_1000205312" description="GMP synthase [glutamine-hydrolyzing]">
    <location>
        <begin position="1"/>
        <end position="525"/>
    </location>
</feature>
<feature type="domain" description="Glutamine amidotransferase type-1" evidence="1">
    <location>
        <begin position="9"/>
        <end position="207"/>
    </location>
</feature>
<feature type="domain" description="GMPS ATP-PPase" evidence="1">
    <location>
        <begin position="208"/>
        <end position="400"/>
    </location>
</feature>
<feature type="active site" description="Nucleophile" evidence="1">
    <location>
        <position position="86"/>
    </location>
</feature>
<feature type="active site" evidence="1">
    <location>
        <position position="181"/>
    </location>
</feature>
<feature type="active site" evidence="1">
    <location>
        <position position="183"/>
    </location>
</feature>
<feature type="binding site" evidence="1">
    <location>
        <begin position="235"/>
        <end position="241"/>
    </location>
    <ligand>
        <name>ATP</name>
        <dbReference type="ChEBI" id="CHEBI:30616"/>
    </ligand>
</feature>
<name>GUAA_TOLAT</name>
<accession>C4L8C4</accession>
<proteinExistence type="inferred from homology"/>
<dbReference type="EC" id="6.3.5.2" evidence="1"/>
<dbReference type="EMBL" id="CP001616">
    <property type="protein sequence ID" value="ACQ93770.1"/>
    <property type="molecule type" value="Genomic_DNA"/>
</dbReference>
<dbReference type="RefSeq" id="WP_015879238.1">
    <property type="nucleotide sequence ID" value="NC_012691.1"/>
</dbReference>
<dbReference type="SMR" id="C4L8C4"/>
<dbReference type="STRING" id="595494.Tola_2171"/>
<dbReference type="KEGG" id="tau:Tola_2171"/>
<dbReference type="eggNOG" id="COG0518">
    <property type="taxonomic scope" value="Bacteria"/>
</dbReference>
<dbReference type="eggNOG" id="COG0519">
    <property type="taxonomic scope" value="Bacteria"/>
</dbReference>
<dbReference type="HOGENOM" id="CLU_014340_0_5_6"/>
<dbReference type="OrthoDB" id="9802219at2"/>
<dbReference type="UniPathway" id="UPA00189">
    <property type="reaction ID" value="UER00296"/>
</dbReference>
<dbReference type="Proteomes" id="UP000009073">
    <property type="component" value="Chromosome"/>
</dbReference>
<dbReference type="GO" id="GO:0005829">
    <property type="term" value="C:cytosol"/>
    <property type="evidence" value="ECO:0007669"/>
    <property type="project" value="TreeGrafter"/>
</dbReference>
<dbReference type="GO" id="GO:0005524">
    <property type="term" value="F:ATP binding"/>
    <property type="evidence" value="ECO:0007669"/>
    <property type="project" value="UniProtKB-UniRule"/>
</dbReference>
<dbReference type="GO" id="GO:0003921">
    <property type="term" value="F:GMP synthase activity"/>
    <property type="evidence" value="ECO:0007669"/>
    <property type="project" value="InterPro"/>
</dbReference>
<dbReference type="CDD" id="cd01742">
    <property type="entry name" value="GATase1_GMP_Synthase"/>
    <property type="match status" value="1"/>
</dbReference>
<dbReference type="CDD" id="cd01997">
    <property type="entry name" value="GMP_synthase_C"/>
    <property type="match status" value="1"/>
</dbReference>
<dbReference type="FunFam" id="3.30.300.10:FF:000002">
    <property type="entry name" value="GMP synthase [glutamine-hydrolyzing]"/>
    <property type="match status" value="1"/>
</dbReference>
<dbReference type="FunFam" id="3.40.50.620:FF:000001">
    <property type="entry name" value="GMP synthase [glutamine-hydrolyzing]"/>
    <property type="match status" value="1"/>
</dbReference>
<dbReference type="FunFam" id="3.40.50.880:FF:000001">
    <property type="entry name" value="GMP synthase [glutamine-hydrolyzing]"/>
    <property type="match status" value="1"/>
</dbReference>
<dbReference type="Gene3D" id="3.30.300.10">
    <property type="match status" value="1"/>
</dbReference>
<dbReference type="Gene3D" id="3.40.50.880">
    <property type="match status" value="1"/>
</dbReference>
<dbReference type="Gene3D" id="3.40.50.620">
    <property type="entry name" value="HUPs"/>
    <property type="match status" value="1"/>
</dbReference>
<dbReference type="HAMAP" id="MF_00344">
    <property type="entry name" value="GMP_synthase"/>
    <property type="match status" value="1"/>
</dbReference>
<dbReference type="InterPro" id="IPR029062">
    <property type="entry name" value="Class_I_gatase-like"/>
</dbReference>
<dbReference type="InterPro" id="IPR017926">
    <property type="entry name" value="GATASE"/>
</dbReference>
<dbReference type="InterPro" id="IPR001674">
    <property type="entry name" value="GMP_synth_C"/>
</dbReference>
<dbReference type="InterPro" id="IPR004739">
    <property type="entry name" value="GMP_synth_GATase"/>
</dbReference>
<dbReference type="InterPro" id="IPR022955">
    <property type="entry name" value="GMP_synthase"/>
</dbReference>
<dbReference type="InterPro" id="IPR025777">
    <property type="entry name" value="GMPS_ATP_PPase_dom"/>
</dbReference>
<dbReference type="InterPro" id="IPR022310">
    <property type="entry name" value="NAD/GMP_synthase"/>
</dbReference>
<dbReference type="InterPro" id="IPR014729">
    <property type="entry name" value="Rossmann-like_a/b/a_fold"/>
</dbReference>
<dbReference type="NCBIfam" id="TIGR00884">
    <property type="entry name" value="guaA_Cterm"/>
    <property type="match status" value="1"/>
</dbReference>
<dbReference type="NCBIfam" id="TIGR00888">
    <property type="entry name" value="guaA_Nterm"/>
    <property type="match status" value="1"/>
</dbReference>
<dbReference type="NCBIfam" id="NF000848">
    <property type="entry name" value="PRK00074.1"/>
    <property type="match status" value="1"/>
</dbReference>
<dbReference type="PANTHER" id="PTHR11922:SF2">
    <property type="entry name" value="GMP SYNTHASE [GLUTAMINE-HYDROLYZING]"/>
    <property type="match status" value="1"/>
</dbReference>
<dbReference type="PANTHER" id="PTHR11922">
    <property type="entry name" value="GMP SYNTHASE-RELATED"/>
    <property type="match status" value="1"/>
</dbReference>
<dbReference type="Pfam" id="PF00117">
    <property type="entry name" value="GATase"/>
    <property type="match status" value="1"/>
</dbReference>
<dbReference type="Pfam" id="PF00958">
    <property type="entry name" value="GMP_synt_C"/>
    <property type="match status" value="1"/>
</dbReference>
<dbReference type="Pfam" id="PF02540">
    <property type="entry name" value="NAD_synthase"/>
    <property type="match status" value="1"/>
</dbReference>
<dbReference type="PRINTS" id="PR00097">
    <property type="entry name" value="ANTSNTHASEII"/>
</dbReference>
<dbReference type="PRINTS" id="PR00099">
    <property type="entry name" value="CPSGATASE"/>
</dbReference>
<dbReference type="PRINTS" id="PR00096">
    <property type="entry name" value="GATASE"/>
</dbReference>
<dbReference type="SUPFAM" id="SSF52402">
    <property type="entry name" value="Adenine nucleotide alpha hydrolases-like"/>
    <property type="match status" value="1"/>
</dbReference>
<dbReference type="SUPFAM" id="SSF52317">
    <property type="entry name" value="Class I glutamine amidotransferase-like"/>
    <property type="match status" value="1"/>
</dbReference>
<dbReference type="SUPFAM" id="SSF54810">
    <property type="entry name" value="GMP synthetase C-terminal dimerisation domain"/>
    <property type="match status" value="1"/>
</dbReference>
<dbReference type="PROSITE" id="PS51273">
    <property type="entry name" value="GATASE_TYPE_1"/>
    <property type="match status" value="1"/>
</dbReference>
<dbReference type="PROSITE" id="PS51553">
    <property type="entry name" value="GMPS_ATP_PPASE"/>
    <property type="match status" value="1"/>
</dbReference>
<sequence>MSKNIHKHRILILDFGSQYTQLIARRVREIGVYCELWAWDVTEEQIREFNPDGIILSGGPESVTESDSPRAPEYVFNAGVPVLGVCYGMQTMAEQLGGKVESSDKREFGYAKVKLVKDSELFHNIEDAITEDGRPELDVWMSHGDKVMEIPVDFVTIAVTPTCPHAAMANEAKRFYGVQFHPEVTHTVQGARMLERFVKEICHCEALWTPATIIEDAVARIREQVGTDEVILGLSGGVDSSVVAMLIHRAVGKQLTCVFVDNGLLRLNEGQQVMEMFGDHFGLNIIKVDAEERFLSALKGIADPELKRKAIGRVFVEVFDDESKKLKNAKWLAQGTIYPDVIESAASKTGKAHVIKSHHNVGGLPDDMKMGLVEPLRELFKDEVRRVGLELGLPYNMLYRHPFPGPGLGVRVLGEVKKEYCDLLRRADAIFIEELHNADLYNKVSQAFTVFLPVRSVGVMGDGRKYDWVVSLRAVETIDFMTAHWAHLPYDFLGHVSNRIINEINGISRVVYDISGKPPATIEWE</sequence>
<evidence type="ECO:0000255" key="1">
    <source>
        <dbReference type="HAMAP-Rule" id="MF_00344"/>
    </source>
</evidence>
<keyword id="KW-0067">ATP-binding</keyword>
<keyword id="KW-0315">Glutamine amidotransferase</keyword>
<keyword id="KW-0332">GMP biosynthesis</keyword>
<keyword id="KW-0436">Ligase</keyword>
<keyword id="KW-0547">Nucleotide-binding</keyword>
<keyword id="KW-0658">Purine biosynthesis</keyword>
<keyword id="KW-1185">Reference proteome</keyword>
<protein>
    <recommendedName>
        <fullName evidence="1">GMP synthase [glutamine-hydrolyzing]</fullName>
        <ecNumber evidence="1">6.3.5.2</ecNumber>
    </recommendedName>
    <alternativeName>
        <fullName evidence="1">GMP synthetase</fullName>
    </alternativeName>
    <alternativeName>
        <fullName evidence="1">Glutamine amidotransferase</fullName>
    </alternativeName>
</protein>